<dbReference type="EMBL" id="AF063228">
    <property type="protein sequence ID" value="AAC33443.1"/>
    <property type="molecule type" value="mRNA"/>
</dbReference>
<dbReference type="EMBL" id="AF123074">
    <property type="protein sequence ID" value="AAD26852.1"/>
    <property type="molecule type" value="mRNA"/>
</dbReference>
<dbReference type="EMBL" id="AK091339">
    <property type="protein sequence ID" value="BAC03639.1"/>
    <property type="molecule type" value="mRNA"/>
</dbReference>
<dbReference type="EMBL" id="AK297427">
    <property type="protein sequence ID" value="BAG59855.1"/>
    <property type="molecule type" value="mRNA"/>
</dbReference>
<dbReference type="EMBL" id="AC022261">
    <property type="status" value="NOT_ANNOTATED_CDS"/>
    <property type="molecule type" value="Genomic_DNA"/>
</dbReference>
<dbReference type="EMBL" id="AC091779">
    <property type="status" value="NOT_ANNOTATED_CDS"/>
    <property type="molecule type" value="Genomic_DNA"/>
</dbReference>
<dbReference type="EMBL" id="AC002452">
    <property type="protein sequence ID" value="AAB67047.2"/>
    <property type="molecule type" value="Genomic_DNA"/>
</dbReference>
<dbReference type="EMBL" id="AC002540">
    <property type="protein sequence ID" value="AAB70113.1"/>
    <property type="molecule type" value="Genomic_DNA"/>
</dbReference>
<dbReference type="EMBL" id="CH471091">
    <property type="protein sequence ID" value="EAW76753.1"/>
    <property type="molecule type" value="Genomic_DNA"/>
</dbReference>
<dbReference type="EMBL" id="BC022540">
    <property type="protein sequence ID" value="AAH22540.1"/>
    <property type="molecule type" value="mRNA"/>
</dbReference>
<dbReference type="CCDS" id="CCDS47645.1">
    <molecule id="O14576-2"/>
</dbReference>
<dbReference type="CCDS" id="CCDS47646.1">
    <molecule id="O14576-3"/>
</dbReference>
<dbReference type="CCDS" id="CCDS5644.1">
    <molecule id="O14576-1"/>
</dbReference>
<dbReference type="CCDS" id="CCDS64718.1">
    <molecule id="O14576-5"/>
</dbReference>
<dbReference type="CCDS" id="CCDS64719.1">
    <molecule id="O14576-4"/>
</dbReference>
<dbReference type="RefSeq" id="NP_001129028.1">
    <molecule id="O14576-2"/>
    <property type="nucleotide sequence ID" value="NM_001135556.2"/>
</dbReference>
<dbReference type="RefSeq" id="NP_001129029.1">
    <molecule id="O14576-3"/>
    <property type="nucleotide sequence ID" value="NM_001135557.2"/>
</dbReference>
<dbReference type="RefSeq" id="NP_001265350.1">
    <molecule id="O14576-5"/>
    <property type="nucleotide sequence ID" value="NM_001278421.2"/>
</dbReference>
<dbReference type="RefSeq" id="NP_001265351.1">
    <molecule id="O14576-4"/>
    <property type="nucleotide sequence ID" value="NM_001278422.2"/>
</dbReference>
<dbReference type="RefSeq" id="NP_004402.1">
    <molecule id="O14576-1"/>
    <property type="nucleotide sequence ID" value="NM_004411.5"/>
</dbReference>
<dbReference type="RefSeq" id="XP_011514163.1">
    <property type="nucleotide sequence ID" value="XM_011515861.1"/>
</dbReference>
<dbReference type="RefSeq" id="XP_011514164.1">
    <property type="nucleotide sequence ID" value="XM_011515862.1"/>
</dbReference>
<dbReference type="RefSeq" id="XP_016867293.1">
    <property type="nucleotide sequence ID" value="XM_017011804.1"/>
</dbReference>
<dbReference type="RefSeq" id="XP_016867294.1">
    <property type="nucleotide sequence ID" value="XM_017011805.1"/>
</dbReference>
<dbReference type="SMR" id="O14576"/>
<dbReference type="BioGRID" id="108118">
    <property type="interactions" value="108"/>
</dbReference>
<dbReference type="CORUM" id="O14576"/>
<dbReference type="ELM" id="O14576"/>
<dbReference type="FunCoup" id="O14576">
    <property type="interactions" value="1119"/>
</dbReference>
<dbReference type="IntAct" id="O14576">
    <property type="interactions" value="62"/>
</dbReference>
<dbReference type="MINT" id="O14576"/>
<dbReference type="STRING" id="9606.ENSP00000320130"/>
<dbReference type="GlyCosmos" id="O14576">
    <property type="glycosylation" value="1 site, 1 glycan"/>
</dbReference>
<dbReference type="GlyGen" id="O14576">
    <property type="glycosylation" value="1 site, 1 O-linked glycan (1 site)"/>
</dbReference>
<dbReference type="iPTMnet" id="O14576"/>
<dbReference type="PhosphoSitePlus" id="O14576"/>
<dbReference type="SwissPalm" id="O14576"/>
<dbReference type="BioMuta" id="DYNC1I1"/>
<dbReference type="jPOST" id="O14576"/>
<dbReference type="MassIVE" id="O14576"/>
<dbReference type="PaxDb" id="9606-ENSP00000320130"/>
<dbReference type="PeptideAtlas" id="O14576"/>
<dbReference type="ProteomicsDB" id="25229"/>
<dbReference type="ProteomicsDB" id="33962"/>
<dbReference type="ProteomicsDB" id="48091">
    <molecule id="O14576-1"/>
</dbReference>
<dbReference type="ProteomicsDB" id="48092">
    <molecule id="O14576-2"/>
</dbReference>
<dbReference type="ProteomicsDB" id="48093">
    <molecule id="O14576-3"/>
</dbReference>
<dbReference type="TopDownProteomics" id="O14576-3">
    <molecule id="O14576-3"/>
</dbReference>
<dbReference type="Antibodypedia" id="15905">
    <property type="antibodies" value="162 antibodies from 26 providers"/>
</dbReference>
<dbReference type="DNASU" id="1780"/>
<dbReference type="Ensembl" id="ENST00000324972.10">
    <molecule id="O14576-1"/>
    <property type="protein sequence ID" value="ENSP00000320130.6"/>
    <property type="gene ID" value="ENSG00000158560.14"/>
</dbReference>
<dbReference type="Ensembl" id="ENST00000359388.8">
    <molecule id="O14576-3"/>
    <property type="protein sequence ID" value="ENSP00000352348.4"/>
    <property type="gene ID" value="ENSG00000158560.14"/>
</dbReference>
<dbReference type="Ensembl" id="ENST00000437599.5">
    <molecule id="O14576-5"/>
    <property type="protein sequence ID" value="ENSP00000398118.1"/>
    <property type="gene ID" value="ENSG00000158560.14"/>
</dbReference>
<dbReference type="Ensembl" id="ENST00000447467.6">
    <molecule id="O14576-2"/>
    <property type="protein sequence ID" value="ENSP00000392337.2"/>
    <property type="gene ID" value="ENSG00000158560.14"/>
</dbReference>
<dbReference type="Ensembl" id="ENST00000457059.2">
    <molecule id="O14576-2"/>
    <property type="protein sequence ID" value="ENSP00000412444.1"/>
    <property type="gene ID" value="ENSG00000158560.14"/>
</dbReference>
<dbReference type="Ensembl" id="ENST00000630942.2">
    <molecule id="O14576-4"/>
    <property type="protein sequence ID" value="ENSP00000486363.1"/>
    <property type="gene ID" value="ENSG00000158560.14"/>
</dbReference>
<dbReference type="GeneID" id="1780"/>
<dbReference type="KEGG" id="hsa:1780"/>
<dbReference type="MANE-Select" id="ENST00000447467.6">
    <molecule id="O14576-2"/>
    <property type="protein sequence ID" value="ENSP00000392337.2"/>
    <property type="RefSeq nucleotide sequence ID" value="NM_001135556.2"/>
    <property type="RefSeq protein sequence ID" value="NP_001129028.1"/>
</dbReference>
<dbReference type="UCSC" id="uc003uob.4">
    <molecule id="O14576-1"/>
    <property type="organism name" value="human"/>
</dbReference>
<dbReference type="AGR" id="HGNC:2963"/>
<dbReference type="CTD" id="1780"/>
<dbReference type="DisGeNET" id="1780"/>
<dbReference type="GeneCards" id="DYNC1I1"/>
<dbReference type="HGNC" id="HGNC:2963">
    <property type="gene designation" value="DYNC1I1"/>
</dbReference>
<dbReference type="HPA" id="ENSG00000158560">
    <property type="expression patterns" value="Tissue enhanced (brain)"/>
</dbReference>
<dbReference type="MalaCards" id="DYNC1I1"/>
<dbReference type="MIM" id="603772">
    <property type="type" value="gene"/>
</dbReference>
<dbReference type="neXtProt" id="NX_O14576"/>
<dbReference type="OpenTargets" id="ENSG00000158560"/>
<dbReference type="PharmGKB" id="PA27434"/>
<dbReference type="VEuPathDB" id="HostDB:ENSG00000158560"/>
<dbReference type="eggNOG" id="KOG1587">
    <property type="taxonomic scope" value="Eukaryota"/>
</dbReference>
<dbReference type="GeneTree" id="ENSGT00940000156032"/>
<dbReference type="HOGENOM" id="CLU_012999_1_1_1"/>
<dbReference type="InParanoid" id="O14576"/>
<dbReference type="OMA" id="CTCMSFA"/>
<dbReference type="OrthoDB" id="4189at2759"/>
<dbReference type="PAN-GO" id="O14576">
    <property type="GO annotations" value="4 GO annotations based on evolutionary models"/>
</dbReference>
<dbReference type="PhylomeDB" id="O14576"/>
<dbReference type="TreeFam" id="TF300553"/>
<dbReference type="PathwayCommons" id="O14576"/>
<dbReference type="Reactome" id="R-HSA-141444">
    <property type="pathway name" value="Amplification of signal from unattached kinetochores via a MAD2 inhibitory signal"/>
</dbReference>
<dbReference type="Reactome" id="R-HSA-2132295">
    <property type="pathway name" value="MHC class II antigen presentation"/>
</dbReference>
<dbReference type="Reactome" id="R-HSA-2467813">
    <property type="pathway name" value="Separation of Sister Chromatids"/>
</dbReference>
<dbReference type="Reactome" id="R-HSA-2500257">
    <property type="pathway name" value="Resolution of Sister Chromatid Cohesion"/>
</dbReference>
<dbReference type="Reactome" id="R-HSA-3371497">
    <property type="pathway name" value="HSP90 chaperone cycle for steroid hormone receptors (SHR) in the presence of ligand"/>
</dbReference>
<dbReference type="Reactome" id="R-HSA-5663220">
    <property type="pathway name" value="RHO GTPases Activate Formins"/>
</dbReference>
<dbReference type="Reactome" id="R-HSA-6807878">
    <property type="pathway name" value="COPI-mediated anterograde transport"/>
</dbReference>
<dbReference type="Reactome" id="R-HSA-6811436">
    <property type="pathway name" value="COPI-independent Golgi-to-ER retrograde traffic"/>
</dbReference>
<dbReference type="Reactome" id="R-HSA-68877">
    <property type="pathway name" value="Mitotic Prometaphase"/>
</dbReference>
<dbReference type="Reactome" id="R-HSA-9609690">
    <property type="pathway name" value="HCMV Early Events"/>
</dbReference>
<dbReference type="Reactome" id="R-HSA-9646399">
    <property type="pathway name" value="Aggrephagy"/>
</dbReference>
<dbReference type="Reactome" id="R-HSA-9648025">
    <property type="pathway name" value="EML4 and NUDC in mitotic spindle formation"/>
</dbReference>
<dbReference type="SignaLink" id="O14576"/>
<dbReference type="BioGRID-ORCS" id="1780">
    <property type="hits" value="8 hits in 1145 CRISPR screens"/>
</dbReference>
<dbReference type="CD-CODE" id="8C2F96ED">
    <property type="entry name" value="Centrosome"/>
</dbReference>
<dbReference type="CD-CODE" id="FB4E32DD">
    <property type="entry name" value="Presynaptic clusters and postsynaptic densities"/>
</dbReference>
<dbReference type="ChiTaRS" id="DYNC1I1">
    <property type="organism name" value="human"/>
</dbReference>
<dbReference type="GeneWiki" id="DYNC1I1"/>
<dbReference type="GenomeRNAi" id="1780"/>
<dbReference type="Pharos" id="O14576">
    <property type="development level" value="Tbio"/>
</dbReference>
<dbReference type="PRO" id="PR:O14576"/>
<dbReference type="Proteomes" id="UP000005640">
    <property type="component" value="Chromosome 7"/>
</dbReference>
<dbReference type="RNAct" id="O14576">
    <property type="molecule type" value="protein"/>
</dbReference>
<dbReference type="Bgee" id="ENSG00000158560">
    <property type="expression patterns" value="Expressed in endothelial cell and 169 other cell types or tissues"/>
</dbReference>
<dbReference type="ExpressionAtlas" id="O14576">
    <property type="expression patterns" value="baseline and differential"/>
</dbReference>
<dbReference type="GO" id="GO:0005737">
    <property type="term" value="C:cytoplasm"/>
    <property type="evidence" value="ECO:0000314"/>
    <property type="project" value="AgBase"/>
</dbReference>
<dbReference type="GO" id="GO:0005868">
    <property type="term" value="C:cytoplasmic dynein complex"/>
    <property type="evidence" value="ECO:0000250"/>
    <property type="project" value="UniProtKB"/>
</dbReference>
<dbReference type="GO" id="GO:0036464">
    <property type="term" value="C:cytoplasmic ribonucleoprotein granule"/>
    <property type="evidence" value="ECO:0000314"/>
    <property type="project" value="ParkinsonsUK-UCL"/>
</dbReference>
<dbReference type="GO" id="GO:0005829">
    <property type="term" value="C:cytosol"/>
    <property type="evidence" value="ECO:0000304"/>
    <property type="project" value="Reactome"/>
</dbReference>
<dbReference type="GO" id="GO:0000776">
    <property type="term" value="C:kinetochore"/>
    <property type="evidence" value="ECO:0000314"/>
    <property type="project" value="UniProtKB"/>
</dbReference>
<dbReference type="GO" id="GO:0005874">
    <property type="term" value="C:microtubule"/>
    <property type="evidence" value="ECO:0007669"/>
    <property type="project" value="UniProtKB-KW"/>
</dbReference>
<dbReference type="GO" id="GO:0005634">
    <property type="term" value="C:nucleus"/>
    <property type="evidence" value="ECO:0000314"/>
    <property type="project" value="AgBase"/>
</dbReference>
<dbReference type="GO" id="GO:0048471">
    <property type="term" value="C:perinuclear region of cytoplasm"/>
    <property type="evidence" value="ECO:0000250"/>
    <property type="project" value="HGNC-UCL"/>
</dbReference>
<dbReference type="GO" id="GO:0055037">
    <property type="term" value="C:recycling endosome"/>
    <property type="evidence" value="ECO:0000314"/>
    <property type="project" value="UniProtKB"/>
</dbReference>
<dbReference type="GO" id="GO:0000922">
    <property type="term" value="C:spindle pole"/>
    <property type="evidence" value="ECO:0000314"/>
    <property type="project" value="UniProtKB"/>
</dbReference>
<dbReference type="GO" id="GO:0031982">
    <property type="term" value="C:vesicle"/>
    <property type="evidence" value="ECO:0000314"/>
    <property type="project" value="UniProtKB"/>
</dbReference>
<dbReference type="GO" id="GO:0003774">
    <property type="term" value="F:cytoskeletal motor activity"/>
    <property type="evidence" value="ECO:0000304"/>
    <property type="project" value="ProtInc"/>
</dbReference>
<dbReference type="GO" id="GO:0045504">
    <property type="term" value="F:dynein heavy chain binding"/>
    <property type="evidence" value="ECO:0000318"/>
    <property type="project" value="GO_Central"/>
</dbReference>
<dbReference type="GO" id="GO:0045503">
    <property type="term" value="F:dynein light chain binding"/>
    <property type="evidence" value="ECO:0000318"/>
    <property type="project" value="GO_Central"/>
</dbReference>
<dbReference type="GO" id="GO:0008017">
    <property type="term" value="F:microtubule binding"/>
    <property type="evidence" value="ECO:0000250"/>
    <property type="project" value="HGNC-UCL"/>
</dbReference>
<dbReference type="GO" id="GO:0003777">
    <property type="term" value="F:microtubule motor activity"/>
    <property type="evidence" value="ECO:0000250"/>
    <property type="project" value="HGNC-UCL"/>
</dbReference>
<dbReference type="GO" id="GO:0030507">
    <property type="term" value="F:spectrin binding"/>
    <property type="evidence" value="ECO:0000314"/>
    <property type="project" value="MGI"/>
</dbReference>
<dbReference type="GO" id="GO:0010970">
    <property type="term" value="P:transport along microtubule"/>
    <property type="evidence" value="ECO:0000318"/>
    <property type="project" value="GO_Central"/>
</dbReference>
<dbReference type="GO" id="GO:0047496">
    <property type="term" value="P:vesicle transport along microtubule"/>
    <property type="evidence" value="ECO:0000315"/>
    <property type="project" value="UniProtKB"/>
</dbReference>
<dbReference type="FunFam" id="2.130.10.10:FF:000108">
    <property type="entry name" value="cytoplasmic dynein 1 intermediate chain 1 isoform X1"/>
    <property type="match status" value="1"/>
</dbReference>
<dbReference type="FunFam" id="2.130.10.10:FF:000026">
    <property type="entry name" value="cytoplasmic dynein 1 intermediate chain 2 isoform X2"/>
    <property type="match status" value="1"/>
</dbReference>
<dbReference type="Gene3D" id="2.130.10.10">
    <property type="entry name" value="YVTN repeat-like/Quinoprotein amine dehydrogenase"/>
    <property type="match status" value="2"/>
</dbReference>
<dbReference type="InterPro" id="IPR025956">
    <property type="entry name" value="DYNC1I1/DYNC1I2"/>
</dbReference>
<dbReference type="InterPro" id="IPR050687">
    <property type="entry name" value="Dynein_IC"/>
</dbReference>
<dbReference type="InterPro" id="IPR015943">
    <property type="entry name" value="WD40/YVTN_repeat-like_dom_sf"/>
</dbReference>
<dbReference type="InterPro" id="IPR036322">
    <property type="entry name" value="WD40_repeat_dom_sf"/>
</dbReference>
<dbReference type="InterPro" id="IPR001680">
    <property type="entry name" value="WD40_rpt"/>
</dbReference>
<dbReference type="PANTHER" id="PTHR12442:SF34">
    <property type="entry name" value="CYTOPLASMIC DYNEIN 1 INTERMEDIATE CHAIN 1"/>
    <property type="match status" value="1"/>
</dbReference>
<dbReference type="PANTHER" id="PTHR12442">
    <property type="entry name" value="DYNEIN INTERMEDIATE CHAIN"/>
    <property type="match status" value="1"/>
</dbReference>
<dbReference type="Pfam" id="PF11540">
    <property type="entry name" value="Dynein_IC2"/>
    <property type="match status" value="1"/>
</dbReference>
<dbReference type="Pfam" id="PF00400">
    <property type="entry name" value="WD40"/>
    <property type="match status" value="2"/>
</dbReference>
<dbReference type="SMART" id="SM00320">
    <property type="entry name" value="WD40"/>
    <property type="match status" value="5"/>
</dbReference>
<dbReference type="SUPFAM" id="SSF50978">
    <property type="entry name" value="WD40 repeat-like"/>
    <property type="match status" value="1"/>
</dbReference>
<dbReference type="PROSITE" id="PS50294">
    <property type="entry name" value="WD_REPEATS_REGION"/>
    <property type="match status" value="1"/>
</dbReference>
<reference key="1">
    <citation type="journal article" date="1999" name="Genomics">
        <title>Cloning and characterization of two cytoplasmic dynein intermediate chain genes in mouse and human.</title>
        <authorList>
            <person name="Crackower M.A."/>
            <person name="Sinasac D.S."/>
            <person name="Xia J."/>
            <person name="Motoyama J."/>
            <person name="Prochazka M."/>
            <person name="Rommens J.M."/>
            <person name="Scherer S.W."/>
            <person name="Tsui L.-C."/>
        </authorList>
    </citation>
    <scope>NUCLEOTIDE SEQUENCE [MRNA] (ISOFORM 1)</scope>
</reference>
<reference key="2">
    <citation type="submission" date="1999-01" db="EMBL/GenBank/DDBJ databases">
        <title>Molecular cloning of a cytoplasmic dynein gene.</title>
        <authorList>
            <person name="Li G."/>
            <person name="Jin J."/>
            <person name="Hu S."/>
            <person name="Li W."/>
            <person name="Yuan J."/>
            <person name="Qiang B."/>
        </authorList>
    </citation>
    <scope>NUCLEOTIDE SEQUENCE [MRNA] (ISOFORM 3)</scope>
</reference>
<reference key="3">
    <citation type="journal article" date="2004" name="Nat. Genet.">
        <title>Complete sequencing and characterization of 21,243 full-length human cDNAs.</title>
        <authorList>
            <person name="Ota T."/>
            <person name="Suzuki Y."/>
            <person name="Nishikawa T."/>
            <person name="Otsuki T."/>
            <person name="Sugiyama T."/>
            <person name="Irie R."/>
            <person name="Wakamatsu A."/>
            <person name="Hayashi K."/>
            <person name="Sato H."/>
            <person name="Nagai K."/>
            <person name="Kimura K."/>
            <person name="Makita H."/>
            <person name="Sekine M."/>
            <person name="Obayashi M."/>
            <person name="Nishi T."/>
            <person name="Shibahara T."/>
            <person name="Tanaka T."/>
            <person name="Ishii S."/>
            <person name="Yamamoto J."/>
            <person name="Saito K."/>
            <person name="Kawai Y."/>
            <person name="Isono Y."/>
            <person name="Nakamura Y."/>
            <person name="Nagahari K."/>
            <person name="Murakami K."/>
            <person name="Yasuda T."/>
            <person name="Iwayanagi T."/>
            <person name="Wagatsuma M."/>
            <person name="Shiratori A."/>
            <person name="Sudo H."/>
            <person name="Hosoiri T."/>
            <person name="Kaku Y."/>
            <person name="Kodaira H."/>
            <person name="Kondo H."/>
            <person name="Sugawara M."/>
            <person name="Takahashi M."/>
            <person name="Kanda K."/>
            <person name="Yokoi T."/>
            <person name="Furuya T."/>
            <person name="Kikkawa E."/>
            <person name="Omura Y."/>
            <person name="Abe K."/>
            <person name="Kamihara K."/>
            <person name="Katsuta N."/>
            <person name="Sato K."/>
            <person name="Tanikawa M."/>
            <person name="Yamazaki M."/>
            <person name="Ninomiya K."/>
            <person name="Ishibashi T."/>
            <person name="Yamashita H."/>
            <person name="Murakawa K."/>
            <person name="Fujimori K."/>
            <person name="Tanai H."/>
            <person name="Kimata M."/>
            <person name="Watanabe M."/>
            <person name="Hiraoka S."/>
            <person name="Chiba Y."/>
            <person name="Ishida S."/>
            <person name="Ono Y."/>
            <person name="Takiguchi S."/>
            <person name="Watanabe S."/>
            <person name="Yosida M."/>
            <person name="Hotuta T."/>
            <person name="Kusano J."/>
            <person name="Kanehori K."/>
            <person name="Takahashi-Fujii A."/>
            <person name="Hara H."/>
            <person name="Tanase T.-O."/>
            <person name="Nomura Y."/>
            <person name="Togiya S."/>
            <person name="Komai F."/>
            <person name="Hara R."/>
            <person name="Takeuchi K."/>
            <person name="Arita M."/>
            <person name="Imose N."/>
            <person name="Musashino K."/>
            <person name="Yuuki H."/>
            <person name="Oshima A."/>
            <person name="Sasaki N."/>
            <person name="Aotsuka S."/>
            <person name="Yoshikawa Y."/>
            <person name="Matsunawa H."/>
            <person name="Ichihara T."/>
            <person name="Shiohata N."/>
            <person name="Sano S."/>
            <person name="Moriya S."/>
            <person name="Momiyama H."/>
            <person name="Satoh N."/>
            <person name="Takami S."/>
            <person name="Terashima Y."/>
            <person name="Suzuki O."/>
            <person name="Nakagawa S."/>
            <person name="Senoh A."/>
            <person name="Mizoguchi H."/>
            <person name="Goto Y."/>
            <person name="Shimizu F."/>
            <person name="Wakebe H."/>
            <person name="Hishigaki H."/>
            <person name="Watanabe T."/>
            <person name="Sugiyama A."/>
            <person name="Takemoto M."/>
            <person name="Kawakami B."/>
            <person name="Yamazaki M."/>
            <person name="Watanabe K."/>
            <person name="Kumagai A."/>
            <person name="Itakura S."/>
            <person name="Fukuzumi Y."/>
            <person name="Fujimori Y."/>
            <person name="Komiyama M."/>
            <person name="Tashiro H."/>
            <person name="Tanigami A."/>
            <person name="Fujiwara T."/>
            <person name="Ono T."/>
            <person name="Yamada K."/>
            <person name="Fujii Y."/>
            <person name="Ozaki K."/>
            <person name="Hirao M."/>
            <person name="Ohmori Y."/>
            <person name="Kawabata A."/>
            <person name="Hikiji T."/>
            <person name="Kobatake N."/>
            <person name="Inagaki H."/>
            <person name="Ikema Y."/>
            <person name="Okamoto S."/>
            <person name="Okitani R."/>
            <person name="Kawakami T."/>
            <person name="Noguchi S."/>
            <person name="Itoh T."/>
            <person name="Shigeta K."/>
            <person name="Senba T."/>
            <person name="Matsumura K."/>
            <person name="Nakajima Y."/>
            <person name="Mizuno T."/>
            <person name="Morinaga M."/>
            <person name="Sasaki M."/>
            <person name="Togashi T."/>
            <person name="Oyama M."/>
            <person name="Hata H."/>
            <person name="Watanabe M."/>
            <person name="Komatsu T."/>
            <person name="Mizushima-Sugano J."/>
            <person name="Satoh T."/>
            <person name="Shirai Y."/>
            <person name="Takahashi Y."/>
            <person name="Nakagawa K."/>
            <person name="Okumura K."/>
            <person name="Nagase T."/>
            <person name="Nomura N."/>
            <person name="Kikuchi H."/>
            <person name="Masuho Y."/>
            <person name="Yamashita R."/>
            <person name="Nakai K."/>
            <person name="Yada T."/>
            <person name="Nakamura Y."/>
            <person name="Ohara O."/>
            <person name="Isogai T."/>
            <person name="Sugano S."/>
        </authorList>
    </citation>
    <scope>NUCLEOTIDE SEQUENCE [LARGE SCALE MRNA] (ISOFORMS 2 AND 4)</scope>
    <source>
        <tissue>Brain</tissue>
    </source>
</reference>
<reference key="4">
    <citation type="journal article" date="2003" name="Nature">
        <title>The DNA sequence of human chromosome 7.</title>
        <authorList>
            <person name="Hillier L.W."/>
            <person name="Fulton R.S."/>
            <person name="Fulton L.A."/>
            <person name="Graves T.A."/>
            <person name="Pepin K.H."/>
            <person name="Wagner-McPherson C."/>
            <person name="Layman D."/>
            <person name="Maas J."/>
            <person name="Jaeger S."/>
            <person name="Walker R."/>
            <person name="Wylie K."/>
            <person name="Sekhon M."/>
            <person name="Becker M.C."/>
            <person name="O'Laughlin M.D."/>
            <person name="Schaller M.E."/>
            <person name="Fewell G.A."/>
            <person name="Delehaunty K.D."/>
            <person name="Miner T.L."/>
            <person name="Nash W.E."/>
            <person name="Cordes M."/>
            <person name="Du H."/>
            <person name="Sun H."/>
            <person name="Edwards J."/>
            <person name="Bradshaw-Cordum H."/>
            <person name="Ali J."/>
            <person name="Andrews S."/>
            <person name="Isak A."/>
            <person name="Vanbrunt A."/>
            <person name="Nguyen C."/>
            <person name="Du F."/>
            <person name="Lamar B."/>
            <person name="Courtney L."/>
            <person name="Kalicki J."/>
            <person name="Ozersky P."/>
            <person name="Bielicki L."/>
            <person name="Scott K."/>
            <person name="Holmes A."/>
            <person name="Harkins R."/>
            <person name="Harris A."/>
            <person name="Strong C.M."/>
            <person name="Hou S."/>
            <person name="Tomlinson C."/>
            <person name="Dauphin-Kohlberg S."/>
            <person name="Kozlowicz-Reilly A."/>
            <person name="Leonard S."/>
            <person name="Rohlfing T."/>
            <person name="Rock S.M."/>
            <person name="Tin-Wollam A.-M."/>
            <person name="Abbott A."/>
            <person name="Minx P."/>
            <person name="Maupin R."/>
            <person name="Strowmatt C."/>
            <person name="Latreille P."/>
            <person name="Miller N."/>
            <person name="Johnson D."/>
            <person name="Murray J."/>
            <person name="Woessner J.P."/>
            <person name="Wendl M.C."/>
            <person name="Yang S.-P."/>
            <person name="Schultz B.R."/>
            <person name="Wallis J.W."/>
            <person name="Spieth J."/>
            <person name="Bieri T.A."/>
            <person name="Nelson J.O."/>
            <person name="Berkowicz N."/>
            <person name="Wohldmann P.E."/>
            <person name="Cook L.L."/>
            <person name="Hickenbotham M.T."/>
            <person name="Eldred J."/>
            <person name="Williams D."/>
            <person name="Bedell J.A."/>
            <person name="Mardis E.R."/>
            <person name="Clifton S.W."/>
            <person name="Chissoe S.L."/>
            <person name="Marra M.A."/>
            <person name="Raymond C."/>
            <person name="Haugen E."/>
            <person name="Gillett W."/>
            <person name="Zhou Y."/>
            <person name="James R."/>
            <person name="Phelps K."/>
            <person name="Iadanoto S."/>
            <person name="Bubb K."/>
            <person name="Simms E."/>
            <person name="Levy R."/>
            <person name="Clendenning J."/>
            <person name="Kaul R."/>
            <person name="Kent W.J."/>
            <person name="Furey T.S."/>
            <person name="Baertsch R.A."/>
            <person name="Brent M.R."/>
            <person name="Keibler E."/>
            <person name="Flicek P."/>
            <person name="Bork P."/>
            <person name="Suyama M."/>
            <person name="Bailey J.A."/>
            <person name="Portnoy M.E."/>
            <person name="Torrents D."/>
            <person name="Chinwalla A.T."/>
            <person name="Gish W.R."/>
            <person name="Eddy S.R."/>
            <person name="McPherson J.D."/>
            <person name="Olson M.V."/>
            <person name="Eichler E.E."/>
            <person name="Green E.D."/>
            <person name="Waterston R.H."/>
            <person name="Wilson R.K."/>
        </authorList>
    </citation>
    <scope>NUCLEOTIDE SEQUENCE [LARGE SCALE GENOMIC DNA]</scope>
</reference>
<reference key="5">
    <citation type="submission" date="2005-09" db="EMBL/GenBank/DDBJ databases">
        <authorList>
            <person name="Mural R.J."/>
            <person name="Istrail S."/>
            <person name="Sutton G.G."/>
            <person name="Florea L."/>
            <person name="Halpern A.L."/>
            <person name="Mobarry C.M."/>
            <person name="Lippert R."/>
            <person name="Walenz B."/>
            <person name="Shatkay H."/>
            <person name="Dew I."/>
            <person name="Miller J.R."/>
            <person name="Flanigan M.J."/>
            <person name="Edwards N.J."/>
            <person name="Bolanos R."/>
            <person name="Fasulo D."/>
            <person name="Halldorsson B.V."/>
            <person name="Hannenhalli S."/>
            <person name="Turner R."/>
            <person name="Yooseph S."/>
            <person name="Lu F."/>
            <person name="Nusskern D.R."/>
            <person name="Shue B.C."/>
            <person name="Zheng X.H."/>
            <person name="Zhong F."/>
            <person name="Delcher A.L."/>
            <person name="Huson D.H."/>
            <person name="Kravitz S.A."/>
            <person name="Mouchard L."/>
            <person name="Reinert K."/>
            <person name="Remington K.A."/>
            <person name="Clark A.G."/>
            <person name="Waterman M.S."/>
            <person name="Eichler E.E."/>
            <person name="Adams M.D."/>
            <person name="Hunkapiller M.W."/>
            <person name="Myers E.W."/>
            <person name="Venter J.C."/>
        </authorList>
    </citation>
    <scope>NUCLEOTIDE SEQUENCE [LARGE SCALE GENOMIC DNA]</scope>
</reference>
<reference key="6">
    <citation type="journal article" date="2004" name="Genome Res.">
        <title>The status, quality, and expansion of the NIH full-length cDNA project: the Mammalian Gene Collection (MGC).</title>
        <authorList>
            <consortium name="The MGC Project Team"/>
        </authorList>
    </citation>
    <scope>NUCLEOTIDE SEQUENCE [LARGE SCALE MRNA] (ISOFORM 5)</scope>
    <source>
        <tissue>Brain</tissue>
    </source>
</reference>
<reference key="7">
    <citation type="journal article" date="2009" name="EMBO J.">
        <title>Dynein light intermediate chain 1 is required for progress through the spindle assembly checkpoint.</title>
        <authorList>
            <person name="Sivaram M.V."/>
            <person name="Wadzinski T.L."/>
            <person name="Redick S.D."/>
            <person name="Manna T."/>
            <person name="Doxsey S.J."/>
        </authorList>
    </citation>
    <scope>SUBCELLULAR LOCATION</scope>
</reference>
<reference key="8">
    <citation type="journal article" date="2009" name="Sci. Signal.">
        <title>Quantitative phosphoproteomic analysis of T cell receptor signaling reveals system-wide modulation of protein-protein interactions.</title>
        <authorList>
            <person name="Mayya V."/>
            <person name="Lundgren D.H."/>
            <person name="Hwang S.-I."/>
            <person name="Rezaul K."/>
            <person name="Wu L."/>
            <person name="Eng J.K."/>
            <person name="Rodionov V."/>
            <person name="Han D.K."/>
        </authorList>
    </citation>
    <scope>PHOSPHORYLATION [LARGE SCALE ANALYSIS] AT SER-635</scope>
    <scope>IDENTIFICATION BY MASS SPECTROMETRY [LARGE SCALE ANALYSIS]</scope>
    <source>
        <tissue>Leukemic T-cell</tissue>
    </source>
</reference>
<reference key="9">
    <citation type="journal article" date="2016" name="J. Biol. Chem.">
        <title>Molecular basis for the protein recognition specificity of the dynein light chain DYNLT1/Tctex1: characterization of the interaction with activin receptor IIB.</title>
        <authorList>
            <person name="Merino-Gracia J."/>
            <person name="Zamora-Carreras H."/>
            <person name="Bruix M."/>
            <person name="Rodriguez-Crespo I."/>
        </authorList>
    </citation>
    <scope>INTERACTION WITH DYNLT1</scope>
    <scope>MUTAGENESIS OF LEU-148; GLY-149; VAL-150; LYS-152; VAL-153; GLN-155; VAL-156; ASP-157 AND PHE-158</scope>
</reference>
<reference key="10">
    <citation type="journal article" date="2016" name="Sci. Rep.">
        <title>MCRS1 associates with cytoplasmic dynein and mediates pericentrosomal material recruitment.</title>
        <authorList>
            <person name="Lee S.H."/>
            <person name="Lee M.S."/>
            <person name="Choi T.I."/>
            <person name="Hong H."/>
            <person name="Seo J.Y."/>
            <person name="Kim C.H."/>
            <person name="Kim J."/>
        </authorList>
    </citation>
    <scope>INTERACTION WITH MCRS1</scope>
</reference>
<reference key="11">
    <citation type="journal article" date="2011" name="Nature">
        <title>Exome sequencing identifies frequent mutation of the SWI/SNF complex gene PBRM1 in renal carcinoma.</title>
        <authorList>
            <person name="Varela I."/>
            <person name="Tarpey P."/>
            <person name="Raine K."/>
            <person name="Huang D."/>
            <person name="Ong C.K."/>
            <person name="Stephens P."/>
            <person name="Davies H."/>
            <person name="Jones D."/>
            <person name="Lin M.L."/>
            <person name="Teague J."/>
            <person name="Bignell G."/>
            <person name="Butler A."/>
            <person name="Cho J."/>
            <person name="Dalgliesh G.L."/>
            <person name="Galappaththige D."/>
            <person name="Greenman C."/>
            <person name="Hardy C."/>
            <person name="Jia M."/>
            <person name="Latimer C."/>
            <person name="Lau K.W."/>
            <person name="Marshall J."/>
            <person name="McLaren S."/>
            <person name="Menzies A."/>
            <person name="Mudie L."/>
            <person name="Stebbings L."/>
            <person name="Largaespada D.A."/>
            <person name="Wessels L.F.A."/>
            <person name="Richard S."/>
            <person name="Kahnoski R.J."/>
            <person name="Anema J."/>
            <person name="Tuveson D.A."/>
            <person name="Perez-Mancera P.A."/>
            <person name="Mustonen V."/>
            <person name="Fischer A."/>
            <person name="Adams D.J."/>
            <person name="Rust A."/>
            <person name="Chan-On W."/>
            <person name="Subimerb C."/>
            <person name="Dykema K."/>
            <person name="Furge K."/>
            <person name="Campbell P.J."/>
            <person name="Teh B.T."/>
            <person name="Stratton M.R."/>
            <person name="Futreal P.A."/>
        </authorList>
    </citation>
    <scope>VARIANT LEU-373</scope>
</reference>
<sequence>MSDKSDLKAELERKKQRLAQIREEKKRKEEERKKKEADMQQKKEPVQDDSDLDRKRRETEALLQSIGISPEPPLVQPLHFLTWDTCYFHYLVPTPMSPSSKSVSTPSEAGSQDSGDLGPLTRTLQWDTDPSVLQLQSDSELGRRLHKLGVSKVTQVDFLPREVVSYSKETQTPLATHQSEEDEEDEEMVESKVGQDSELENQDKKQEVKEAPPRELTEEEKQQILHSEEFLIFFDRTIRVIERALAEDSDIFFDYSGRELEEKDGDVQAGANLSFNRQFYDEHWSKHRVVTCMDWSLQYPELMVASYNNNEDAPHEPDGVALVWNMKFKKTTPEYVFHCQSSVMSVCFARFHPNLVVGGTYSGQIVLWDNRSHRRTPVQRTPLSAAAHTHPVYCVNVVGTQNAHNLITVSTDGKMCSWSLDMLSTPQESMELVYNKSKPVAVTGMAFPTGDVNNFVVGSEEGTVYTACRHGSKAGIGEVFEGHQGPVTGINCHMAVGPIDFSHLFVTSSFDWTVKLWTTKHNKPLYSFEDNADYVYDVMWSPVHPALFACVDGMGRLDLWNLNNDTEVPTASVAIEGASALNRVRWAQAGKEVAVGDSEGRIWVYDVGELAVPHNDEWTRFARTLVEIRANRADSEEEGTVELSA</sequence>
<accession>O14576</accession>
<accession>B4DME3</accession>
<accession>F5H050</accession>
<accession>G5E9K1</accession>
<accession>Q8TBF7</accession>
<accession>Q9Y2X1</accession>
<gene>
    <name type="primary">DYNC1I1</name>
    <name type="synonym">DNCI1</name>
    <name type="synonym">DNCIC1</name>
</gene>
<protein>
    <recommendedName>
        <fullName>Cytoplasmic dynein 1 intermediate chain 1</fullName>
    </recommendedName>
    <alternativeName>
        <fullName>Cytoplasmic dynein intermediate chain 1</fullName>
    </alternativeName>
    <alternativeName>
        <fullName>Dynein intermediate chain 1, cytosolic</fullName>
        <shortName>DH IC-1</shortName>
    </alternativeName>
</protein>
<organism>
    <name type="scientific">Homo sapiens</name>
    <name type="common">Human</name>
    <dbReference type="NCBI Taxonomy" id="9606"/>
    <lineage>
        <taxon>Eukaryota</taxon>
        <taxon>Metazoa</taxon>
        <taxon>Chordata</taxon>
        <taxon>Craniata</taxon>
        <taxon>Vertebrata</taxon>
        <taxon>Euteleostomi</taxon>
        <taxon>Mammalia</taxon>
        <taxon>Eutheria</taxon>
        <taxon>Euarchontoglires</taxon>
        <taxon>Primates</taxon>
        <taxon>Haplorrhini</taxon>
        <taxon>Catarrhini</taxon>
        <taxon>Hominidae</taxon>
        <taxon>Homo</taxon>
    </lineage>
</organism>
<evidence type="ECO:0000250" key="1"/>
<evidence type="ECO:0000250" key="2">
    <source>
        <dbReference type="UniProtKB" id="O88485"/>
    </source>
</evidence>
<evidence type="ECO:0000250" key="3">
    <source>
        <dbReference type="UniProtKB" id="Q13409"/>
    </source>
</evidence>
<evidence type="ECO:0000250" key="4">
    <source>
        <dbReference type="UniProtKB" id="Q62871"/>
    </source>
</evidence>
<evidence type="ECO:0000256" key="5">
    <source>
        <dbReference type="SAM" id="MobiDB-lite"/>
    </source>
</evidence>
<evidence type="ECO:0000269" key="6">
    <source>
    </source>
</evidence>
<evidence type="ECO:0000269" key="7">
    <source>
    </source>
</evidence>
<evidence type="ECO:0000269" key="8">
    <source>
    </source>
</evidence>
<evidence type="ECO:0000269" key="9">
    <source>
    </source>
</evidence>
<evidence type="ECO:0000303" key="10">
    <source>
    </source>
</evidence>
<evidence type="ECO:0000303" key="11">
    <source>
    </source>
</evidence>
<evidence type="ECO:0000303" key="12">
    <source ref="2"/>
</evidence>
<evidence type="ECO:0000305" key="13"/>
<evidence type="ECO:0007744" key="14">
    <source>
    </source>
</evidence>
<keyword id="KW-0007">Acetylation</keyword>
<keyword id="KW-0025">Alternative splicing</keyword>
<keyword id="KW-0137">Centromere</keyword>
<keyword id="KW-0158">Chromosome</keyword>
<keyword id="KW-0963">Cytoplasm</keyword>
<keyword id="KW-0206">Cytoskeleton</keyword>
<keyword id="KW-0243">Dynein</keyword>
<keyword id="KW-0995">Kinetochore</keyword>
<keyword id="KW-0493">Microtubule</keyword>
<keyword id="KW-0505">Motor protein</keyword>
<keyword id="KW-0597">Phosphoprotein</keyword>
<keyword id="KW-1267">Proteomics identification</keyword>
<keyword id="KW-1185">Reference proteome</keyword>
<keyword id="KW-0677">Repeat</keyword>
<keyword id="KW-0813">Transport</keyword>
<keyword id="KW-0853">WD repeat</keyword>
<proteinExistence type="evidence at protein level"/>
<comment type="function">
    <text>Acts as one of several non-catalytic accessory components of the cytoplasmic dynein 1 complex that are thought to be involved in linking dynein to cargos and to adapter proteins that regulate dynein function. Cytoplasmic dynein 1 acts as a motor for the intracellular retrograde motility of vesicles and organelles along microtubules. The intermediate chains mediate the binding of dynein to dynactin via its 150 kDa component (p150-glued) DCTN1. May play a role in mediating the interaction of cytoplasmic dynein with membranous organelles and kinetochores.</text>
</comment>
<comment type="subunit">
    <text evidence="1 8 9">Homodimer (By similarity). The cytoplasmic dynein 1 complex consists of two catalytic heavy chains (HCs) and a number of non-catalytic subunits presented by intermediate chains (ICs), light intermediate chains (LICs) and light chains (LCs); the composition seems to vary in respect to the IC, LIC and LC composition. The heavy chain homodimer serves as a scaffold for the probable homodimeric assembly of the respective non-catalytic subunits. The ICs and LICs bind directly to the HC dimer and the LCs assemble on the IC dimer. Interacts with DYNC1H1. Interacts with DYNLT1 and DYNLT3. Interacts with DCTN1 (By similarity). Interacts with MCRS1; the interaction is required for the proper distribution of centriolar satellites (PubMed:27263857).</text>
</comment>
<comment type="interaction">
    <interactant intactId="EBI-366267">
        <id>O14576</id>
    </interactant>
    <interactant intactId="EBI-2372628">
        <id>Q8TD16</id>
        <label>BICD2</label>
    </interactant>
    <organismsDiffer>false</organismsDiffer>
    <experiments>2</experiments>
</comment>
<comment type="interaction">
    <interactant intactId="EBI-366267">
        <id>O14576</id>
    </interactant>
    <interactant intactId="EBI-742371">
        <id>Q96FJ2</id>
        <label>DYNLL2</label>
    </interactant>
    <organismsDiffer>false</organismsDiffer>
    <experiments>3</experiments>
</comment>
<comment type="interaction">
    <interactant intactId="EBI-366267">
        <id>O14576</id>
    </interactant>
    <interactant intactId="EBI-372128">
        <id>Q9NP97</id>
        <label>DYNLRB1</label>
    </interactant>
    <organismsDiffer>false</organismsDiffer>
    <experiments>3</experiments>
</comment>
<comment type="interaction">
    <interactant intactId="EBI-366267">
        <id>O14576</id>
    </interactant>
    <interactant intactId="EBI-2556127">
        <id>Q9H4H8</id>
        <label>FAM83D</label>
    </interactant>
    <organismsDiffer>false</organismsDiffer>
    <experiments>3</experiments>
</comment>
<comment type="interaction">
    <interactant intactId="EBI-366267">
        <id>O14576</id>
    </interactant>
    <interactant intactId="EBI-309934">
        <id>Q9CZA6</id>
        <label>Nde1</label>
    </interactant>
    <organismsDiffer>true</organismsDiffer>
    <experiments>2</experiments>
</comment>
<comment type="interaction">
    <interactant intactId="EBI-25840445">
        <id>O14576-2</id>
    </interactant>
    <interactant intactId="EBI-77613">
        <id>P05067</id>
        <label>APP</label>
    </interactant>
    <organismsDiffer>false</organismsDiffer>
    <experiments>3</experiments>
</comment>
<comment type="interaction">
    <interactant intactId="EBI-25840445">
        <id>O14576-2</id>
    </interactant>
    <interactant intactId="EBI-25840379">
        <id>Q14203-5</id>
        <label>DCTN1</label>
    </interactant>
    <organismsDiffer>false</organismsDiffer>
    <experiments>3</experiments>
</comment>
<comment type="interaction">
    <interactant intactId="EBI-25840445">
        <id>O14576-2</id>
    </interactant>
    <interactant intactId="EBI-373144">
        <id>Q9GZQ8</id>
        <label>MAP1LC3B</label>
    </interactant>
    <organismsDiffer>false</organismsDiffer>
    <experiments>3</experiments>
</comment>
<comment type="interaction">
    <interactant intactId="EBI-25840445">
        <id>O14576-2</id>
    </interactant>
    <interactant intactId="EBI-712238">
        <id>P00491</id>
        <label>PNP</label>
    </interactant>
    <organismsDiffer>false</organismsDiffer>
    <experiments>3</experiments>
</comment>
<comment type="interaction">
    <interactant intactId="EBI-25840445">
        <id>O14576-2</id>
    </interactant>
    <interactant intactId="EBI-458391">
        <id>P04271</id>
        <label>S100B</label>
    </interactant>
    <organismsDiffer>false</organismsDiffer>
    <experiments>3</experiments>
</comment>
<comment type="interaction">
    <interactant intactId="EBI-25840445">
        <id>O14576-2</id>
    </interactant>
    <interactant intactId="EBI-307104">
        <id>Q13501</id>
        <label>SQSTM1</label>
    </interactant>
    <organismsDiffer>false</organismsDiffer>
    <experiments>3</experiments>
</comment>
<comment type="interaction">
    <interactant intactId="EBI-25840445">
        <id>O14576-2</id>
    </interactant>
    <interactant intactId="EBI-25892332">
        <id>P43405-2</id>
        <label>SYK</label>
    </interactant>
    <organismsDiffer>false</organismsDiffer>
    <experiments>3</experiments>
</comment>
<comment type="interaction">
    <interactant intactId="EBI-25840445">
        <id>O14576-2</id>
    </interactant>
    <interactant intactId="EBI-473284">
        <id>Q9BVJ6</id>
        <label>UTP14A</label>
    </interactant>
    <organismsDiffer>false</organismsDiffer>
    <experiments>3</experiments>
</comment>
<comment type="interaction">
    <interactant intactId="EBI-25840445">
        <id>O14576-2</id>
    </interactant>
    <interactant intactId="EBI-11141397">
        <id>Q9UBQ0-2</id>
        <label>VPS29</label>
    </interactant>
    <organismsDiffer>false</organismsDiffer>
    <experiments>3</experiments>
</comment>
<comment type="interaction">
    <interactant intactId="EBI-25936079">
        <id>O14576-5</id>
    </interactant>
    <interactant intactId="EBI-77613">
        <id>P05067</id>
        <label>APP</label>
    </interactant>
    <organismsDiffer>false</organismsDiffer>
    <experiments>3</experiments>
</comment>
<comment type="subcellular location">
    <subcellularLocation>
        <location evidence="1">Cytoplasm</location>
    </subcellularLocation>
    <subcellularLocation>
        <location evidence="6">Chromosome</location>
        <location evidence="6">Centromere</location>
        <location evidence="6">Kinetochore</location>
    </subcellularLocation>
    <subcellularLocation>
        <location evidence="6">Cytoplasm</location>
        <location evidence="6">Cytoskeleton</location>
        <location evidence="6">Spindle pole</location>
    </subcellularLocation>
</comment>
<comment type="alternative products">
    <event type="alternative splicing"/>
    <isoform>
        <id>O14576-1</id>
        <name>1</name>
        <sequence type="displayed"/>
    </isoform>
    <isoform>
        <id>O14576-2</id>
        <name>2</name>
        <sequence type="described" ref="VSP_001332"/>
    </isoform>
    <isoform>
        <id>O14576-3</id>
        <name>3</name>
        <sequence type="described" ref="VSP_001332 VSP_001333"/>
    </isoform>
    <isoform>
        <id>O14576-4</id>
        <name>4</name>
        <sequence type="described" ref="VSP_001332 VSP_001333 VSP_054766"/>
    </isoform>
    <isoform>
        <id>O14576-5</id>
        <name>5</name>
        <sequence type="described" ref="VSP_001333"/>
    </isoform>
</comment>
<comment type="similarity">
    <text evidence="13">Belongs to the dynein intermediate chain family.</text>
</comment>
<name>DC1I1_HUMAN</name>
<feature type="initiator methionine" description="Removed" evidence="3">
    <location>
        <position position="1"/>
    </location>
</feature>
<feature type="chain" id="PRO_0000114652" description="Cytoplasmic dynein 1 intermediate chain 1">
    <location>
        <begin position="2"/>
        <end position="645"/>
    </location>
</feature>
<feature type="repeat" description="WD 1">
    <location>
        <begin position="285"/>
        <end position="334"/>
    </location>
</feature>
<feature type="repeat" description="WD 2">
    <location>
        <begin position="338"/>
        <end position="378"/>
    </location>
</feature>
<feature type="repeat" description="WD 3">
    <location>
        <begin position="387"/>
        <end position="428"/>
    </location>
</feature>
<feature type="repeat" description="WD 4">
    <location>
        <begin position="437"/>
        <end position="477"/>
    </location>
</feature>
<feature type="repeat" description="WD 5">
    <location>
        <begin position="482"/>
        <end position="527"/>
    </location>
</feature>
<feature type="repeat" description="WD 6">
    <location>
        <begin position="530"/>
        <end position="570"/>
    </location>
</feature>
<feature type="repeat" description="WD 7">
    <location>
        <begin position="576"/>
        <end position="615"/>
    </location>
</feature>
<feature type="region of interest" description="Disordered" evidence="5">
    <location>
        <begin position="1"/>
        <end position="58"/>
    </location>
</feature>
<feature type="region of interest" description="Interaction with DCTN1" evidence="1">
    <location>
        <begin position="2"/>
        <end position="123"/>
    </location>
</feature>
<feature type="region of interest" description="Disordered" evidence="5">
    <location>
        <begin position="96"/>
        <end position="125"/>
    </location>
</feature>
<feature type="region of interest" description="Interaction with DYNLT1" evidence="9">
    <location>
        <begin position="147"/>
        <end position="163"/>
    </location>
</feature>
<feature type="region of interest" description="Disordered" evidence="5">
    <location>
        <begin position="169"/>
        <end position="221"/>
    </location>
</feature>
<feature type="compositionally biased region" description="Basic and acidic residues" evidence="5">
    <location>
        <begin position="1"/>
        <end position="13"/>
    </location>
</feature>
<feature type="compositionally biased region" description="Basic and acidic residues" evidence="5">
    <location>
        <begin position="20"/>
        <end position="58"/>
    </location>
</feature>
<feature type="compositionally biased region" description="Low complexity" evidence="5">
    <location>
        <begin position="96"/>
        <end position="107"/>
    </location>
</feature>
<feature type="compositionally biased region" description="Basic and acidic residues" evidence="5">
    <location>
        <begin position="189"/>
        <end position="221"/>
    </location>
</feature>
<feature type="modified residue" description="N-acetylserine" evidence="3">
    <location>
        <position position="2"/>
    </location>
</feature>
<feature type="modified residue" description="Phosphoserine" evidence="2">
    <location>
        <position position="50"/>
    </location>
</feature>
<feature type="modified residue" description="Phosphoserine" evidence="4">
    <location>
        <position position="100"/>
    </location>
</feature>
<feature type="modified residue" description="Phosphothreonine" evidence="3">
    <location>
        <position position="105"/>
    </location>
</feature>
<feature type="modified residue" description="Phosphoserine" evidence="3">
    <location>
        <position position="107"/>
    </location>
</feature>
<feature type="modified residue" description="Phosphoserine" evidence="2">
    <location>
        <position position="111"/>
    </location>
</feature>
<feature type="modified residue" description="Phosphoserine" evidence="2">
    <location>
        <position position="114"/>
    </location>
</feature>
<feature type="modified residue" description="Phosphothreonine" evidence="2">
    <location>
        <position position="176"/>
    </location>
</feature>
<feature type="modified residue" description="Phosphoserine" evidence="2">
    <location>
        <position position="179"/>
    </location>
</feature>
<feature type="modified residue" description="Phosphoserine" evidence="2">
    <location>
        <position position="197"/>
    </location>
</feature>
<feature type="modified residue" description="Phosphoserine" evidence="14">
    <location>
        <position position="635"/>
    </location>
</feature>
<feature type="splice variant" id="VSP_001332" description="In isoform 2, isoform 3 and isoform 4." evidence="10 12">
    <location>
        <begin position="74"/>
        <end position="90"/>
    </location>
</feature>
<feature type="splice variant" id="VSP_001333" description="In isoform 3, isoform 4 and isoform 5." evidence="10 11 12">
    <location>
        <begin position="123"/>
        <end position="142"/>
    </location>
</feature>
<feature type="splice variant" id="VSP_054766" description="In isoform 4." evidence="10">
    <original>LAVPHNDEWTRFARTLVEIRANRADSEEEGTVELSA</original>
    <variation>GLAMLPGWSQNSWTQAILLCWPPKVLGLQT</variation>
    <location>
        <begin position="610"/>
        <end position="645"/>
    </location>
</feature>
<feature type="sequence variant" id="VAR_064709" description="Found in a renal cell carcinoma case; somatic mutation." evidence="7">
    <original>H</original>
    <variation>L</variation>
    <location>
        <position position="373"/>
    </location>
</feature>
<feature type="sequence variant" id="VAR_048905" description="In dbSNP:rs35077523.">
    <original>N</original>
    <variation>T</variation>
    <location>
        <position position="582"/>
    </location>
</feature>
<feature type="mutagenesis site" description="Disrupts interaction with DYNLT1." evidence="9">
    <original>L</original>
    <variation>G</variation>
    <location>
        <position position="148"/>
    </location>
</feature>
<feature type="mutagenesis site" description="No effect on interaction with DYNLT1." evidence="9">
    <original>G</original>
    <variation>E</variation>
    <location>
        <position position="149"/>
    </location>
</feature>
<feature type="mutagenesis site" description="Disrupts interaction with DYNLT1." evidence="9">
    <original>V</original>
    <variation>G</variation>
    <location>
        <position position="150"/>
    </location>
</feature>
<feature type="mutagenesis site" description="No effect on interaction with DYNLT1." evidence="9">
    <original>V</original>
    <variation>W</variation>
    <location>
        <position position="150"/>
    </location>
</feature>
<feature type="mutagenesis site" description="No effect on interaction with DYNLT1." evidence="9">
    <original>K</original>
    <variation>A</variation>
    <variation>Y</variation>
    <location>
        <position position="152"/>
    </location>
</feature>
<feature type="mutagenesis site" description="Decreases interaction with DYNLT1." evidence="9">
    <original>V</original>
    <variation>G</variation>
    <location>
        <position position="153"/>
    </location>
</feature>
<feature type="mutagenesis site" description="No effect on interaction with DYNLT1." evidence="9">
    <original>Q</original>
    <variation>H</variation>
    <variation>R</variation>
    <variation>T</variation>
    <variation>Y</variation>
    <location>
        <position position="155"/>
    </location>
</feature>
<feature type="mutagenesis site" description="Decreases interaction with DYNLT1." evidence="9">
    <original>V</original>
    <variation>G</variation>
    <location>
        <position position="156"/>
    </location>
</feature>
<feature type="mutagenesis site" description="No effect on interaction with DYNLT1." evidence="9">
    <original>D</original>
    <variation>R</variation>
    <location>
        <position position="157"/>
    </location>
</feature>
<feature type="mutagenesis site" description="Disrupts interaction with DYNLT1." evidence="9">
    <original>F</original>
    <variation>G</variation>
    <location>
        <position position="158"/>
    </location>
</feature>
<feature type="sequence conflict" description="In Ref. 3; BAG59855." evidence="13" ref="3">
    <original>D</original>
    <variation>G</variation>
    <location>
        <position position="254"/>
    </location>
</feature>
<feature type="sequence conflict" description="In Ref. 6; AAH22540." evidence="13" ref="6">
    <original>W</original>
    <variation>C</variation>
    <location>
        <position position="517"/>
    </location>
</feature>